<dbReference type="EMBL" id="Z46787">
    <property type="protein sequence ID" value="CAA86741.1"/>
    <property type="molecule type" value="Genomic_DNA"/>
</dbReference>
<dbReference type="PIR" id="T19324">
    <property type="entry name" value="T19324"/>
</dbReference>
<dbReference type="RefSeq" id="NP_497834.1">
    <property type="nucleotide sequence ID" value="NM_065433.8"/>
</dbReference>
<dbReference type="SMR" id="Q09249"/>
<dbReference type="BioGRID" id="40772">
    <property type="interactions" value="32"/>
</dbReference>
<dbReference type="FunCoup" id="Q09249">
    <property type="interactions" value="200"/>
</dbReference>
<dbReference type="IntAct" id="Q09249">
    <property type="interactions" value="1"/>
</dbReference>
<dbReference type="STRING" id="6239.C16C10.3.1"/>
<dbReference type="PaxDb" id="6239-C16C10.3"/>
<dbReference type="PeptideAtlas" id="Q09249"/>
<dbReference type="EnsemblMetazoa" id="C16C10.3.1">
    <property type="protein sequence ID" value="C16C10.3.1"/>
    <property type="gene ID" value="WBGene00007624"/>
</dbReference>
<dbReference type="GeneID" id="175535"/>
<dbReference type="KEGG" id="cel:CELE_C16C10.3"/>
<dbReference type="UCSC" id="C16C10.3">
    <property type="organism name" value="c. elegans"/>
</dbReference>
<dbReference type="AGR" id="WB:WBGene00007624"/>
<dbReference type="CTD" id="175535"/>
<dbReference type="WormBase" id="C16C10.3">
    <property type="protein sequence ID" value="CE01494"/>
    <property type="gene ID" value="WBGene00007624"/>
    <property type="gene designation" value="hrde-1"/>
</dbReference>
<dbReference type="eggNOG" id="KOG1041">
    <property type="taxonomic scope" value="Eukaryota"/>
</dbReference>
<dbReference type="GeneTree" id="ENSGT00970000196195"/>
<dbReference type="HOGENOM" id="CLU_012806_0_0_1"/>
<dbReference type="InParanoid" id="Q09249"/>
<dbReference type="OMA" id="LPHQMRE"/>
<dbReference type="OrthoDB" id="10252740at2759"/>
<dbReference type="PhylomeDB" id="Q09249"/>
<dbReference type="PRO" id="PR:Q09249"/>
<dbReference type="Proteomes" id="UP000001940">
    <property type="component" value="Chromosome III"/>
</dbReference>
<dbReference type="Bgee" id="WBGene00007624">
    <property type="expression patterns" value="Expressed in adult organism and 4 other cell types or tissues"/>
</dbReference>
<dbReference type="GO" id="GO:0005737">
    <property type="term" value="C:cytoplasm"/>
    <property type="evidence" value="ECO:0000318"/>
    <property type="project" value="GO_Central"/>
</dbReference>
<dbReference type="GO" id="GO:0036464">
    <property type="term" value="C:cytoplasmic ribonucleoprotein granule"/>
    <property type="evidence" value="ECO:0000318"/>
    <property type="project" value="GO_Central"/>
</dbReference>
<dbReference type="GO" id="GO:0005634">
    <property type="term" value="C:nucleus"/>
    <property type="evidence" value="ECO:0000314"/>
    <property type="project" value="WormBase"/>
</dbReference>
<dbReference type="GO" id="GO:0016442">
    <property type="term" value="C:RISC complex"/>
    <property type="evidence" value="ECO:0000318"/>
    <property type="project" value="GO_Central"/>
</dbReference>
<dbReference type="GO" id="GO:0031332">
    <property type="term" value="C:RNAi effector complex"/>
    <property type="evidence" value="ECO:0000314"/>
    <property type="project" value="WormBase"/>
</dbReference>
<dbReference type="GO" id="GO:0035198">
    <property type="term" value="F:miRNA binding"/>
    <property type="evidence" value="ECO:0000318"/>
    <property type="project" value="GO_Central"/>
</dbReference>
<dbReference type="GO" id="GO:0004521">
    <property type="term" value="F:RNA endonuclease activity"/>
    <property type="evidence" value="ECO:0000318"/>
    <property type="project" value="GO_Central"/>
</dbReference>
<dbReference type="GO" id="GO:0003727">
    <property type="term" value="F:single-stranded RNA binding"/>
    <property type="evidence" value="ECO:0000318"/>
    <property type="project" value="GO_Central"/>
</dbReference>
<dbReference type="GO" id="GO:0007281">
    <property type="term" value="P:germ cell development"/>
    <property type="evidence" value="ECO:0000315"/>
    <property type="project" value="WormBase"/>
</dbReference>
<dbReference type="GO" id="GO:0035194">
    <property type="term" value="P:regulatory ncRNA-mediated post-transcriptional gene silencing"/>
    <property type="evidence" value="ECO:0000315"/>
    <property type="project" value="WormBase"/>
</dbReference>
<dbReference type="CDD" id="cd02846">
    <property type="entry name" value="PAZ_argonaute_like"/>
    <property type="match status" value="1"/>
</dbReference>
<dbReference type="CDD" id="cd02826">
    <property type="entry name" value="Piwi-like"/>
    <property type="match status" value="1"/>
</dbReference>
<dbReference type="Gene3D" id="3.40.50.2300">
    <property type="match status" value="1"/>
</dbReference>
<dbReference type="Gene3D" id="2.170.260.10">
    <property type="entry name" value="paz domain"/>
    <property type="match status" value="1"/>
</dbReference>
<dbReference type="Gene3D" id="3.30.420.10">
    <property type="entry name" value="Ribonuclease H-like superfamily/Ribonuclease H"/>
    <property type="match status" value="1"/>
</dbReference>
<dbReference type="InterPro" id="IPR056992">
    <property type="entry name" value="HRDE1/NRDE-3-like_N"/>
</dbReference>
<dbReference type="InterPro" id="IPR003100">
    <property type="entry name" value="PAZ_dom"/>
</dbReference>
<dbReference type="InterPro" id="IPR036085">
    <property type="entry name" value="PAZ_dom_sf"/>
</dbReference>
<dbReference type="InterPro" id="IPR003165">
    <property type="entry name" value="Piwi"/>
</dbReference>
<dbReference type="InterPro" id="IPR012337">
    <property type="entry name" value="RNaseH-like_sf"/>
</dbReference>
<dbReference type="InterPro" id="IPR036397">
    <property type="entry name" value="RNaseH_sf"/>
</dbReference>
<dbReference type="PANTHER" id="PTHR22891">
    <property type="entry name" value="EUKARYOTIC TRANSLATION INITIATION FACTOR 2C"/>
    <property type="match status" value="1"/>
</dbReference>
<dbReference type="Pfam" id="PF25128">
    <property type="entry name" value="HRDE1_NRDE3_N"/>
    <property type="match status" value="1"/>
</dbReference>
<dbReference type="Pfam" id="PF02170">
    <property type="entry name" value="PAZ"/>
    <property type="match status" value="1"/>
</dbReference>
<dbReference type="Pfam" id="PF02171">
    <property type="entry name" value="Piwi"/>
    <property type="match status" value="1"/>
</dbReference>
<dbReference type="SMART" id="SM00949">
    <property type="entry name" value="PAZ"/>
    <property type="match status" value="1"/>
</dbReference>
<dbReference type="SMART" id="SM00950">
    <property type="entry name" value="Piwi"/>
    <property type="match status" value="1"/>
</dbReference>
<dbReference type="SUPFAM" id="SSF101690">
    <property type="entry name" value="PAZ domain"/>
    <property type="match status" value="1"/>
</dbReference>
<dbReference type="SUPFAM" id="SSF53098">
    <property type="entry name" value="Ribonuclease H-like"/>
    <property type="match status" value="1"/>
</dbReference>
<dbReference type="PROSITE" id="PS50821">
    <property type="entry name" value="PAZ"/>
    <property type="match status" value="1"/>
</dbReference>
<dbReference type="PROSITE" id="PS50822">
    <property type="entry name" value="PIWI"/>
    <property type="match status" value="1"/>
</dbReference>
<protein>
    <recommendedName>
        <fullName evidence="9">Argonaute protein hrde-1</fullName>
    </recommendedName>
    <alternativeName>
        <fullName evidence="7 10">Heritable RNAi deficient 1</fullName>
    </alternativeName>
    <alternativeName>
        <fullName evidence="8">Nuclear Argonaute HRDE-1</fullName>
    </alternativeName>
</protein>
<comment type="function">
    <text evidence="4 5 6">Argonaute protein which is involved in the endogenous small interfering RNA (endo-siRNA) pathway and is required for RNA-mediated gene silencing (RNAi) in the germline (PubMed:22810588, PubMed:28533440). Interacts with secondary 22G-RNAs in an hrde-2-dependent manner; 22G-RNAs are RNA-dependent RNA polymerase-derived endo-siRNAs, typically 22 nucleotides in length with a 5'-guanosine residue (PubMed:22810588, PubMed:28533440). Plays a key role in transgenerational epigenetic inheritance and germline immortality (PubMed:22810588, PubMed:37083324). May be involved in transgenerational gene silencing both by inducing subnuclear-co-localization of target genes into heterochromatin and by activation of small RNA amplification in the nuage (PubMed:37083324).</text>
</comment>
<comment type="subcellular location">
    <subcellularLocation>
        <location evidence="6">Cytoplasm</location>
        <location evidence="6">Cytoplasmic ribonucleoprotein granule</location>
    </subcellularLocation>
    <subcellularLocation>
        <location evidence="4">Nucleus</location>
    </subcellularLocation>
    <text evidence="6">Shuttles to and from the nucleus to the peri-nuclear region of the cytoplasm called nuage (PubMed:37083324). Co-localizes with mut-16, probably to subdomains of the nuage known as Mutator foci (PubMed:37083324).</text>
</comment>
<comment type="tissue specificity">
    <text evidence="4">Expressed in the nuclei of male and female germ cells.</text>
</comment>
<comment type="disruption phenotype">
    <text evidence="4 5">Mortal germline (Mrt) phenotype in which there is a progressive decline in fertility with each generation at 25 degrees Celsius, and after 2 to 3 generations the brood size is 25% that of wild-type counterparts (PubMed:22810588, PubMed:28533440). Fertility in these mutants may be restored when transferred to a 20 degrees Celsius environment (PubMed:28533440). Progressive decline in fertility is probably due to defects in gametogenesis causing a failure to produce mature oocytes or sperm (PubMed:22810588). Defective RNAi inheritance (PubMed:22810588, PubMed:28533440). Abolishes RNAi-mediated recruitment of nrde-2 to germline pre-messenger RNAs (PubMed:22810588). Exhibits depletion of repressive chromatin mark H3K9me3 in specific germline-expressed genes, especially those believed to be targets of the nuclear RNAi defective factors (PubMed:22810588).</text>
</comment>
<comment type="similarity">
    <text evidence="9">Belongs to the argonaute family. WAGO subfamily.</text>
</comment>
<organism>
    <name type="scientific">Caenorhabditis elegans</name>
    <dbReference type="NCBI Taxonomy" id="6239"/>
    <lineage>
        <taxon>Eukaryota</taxon>
        <taxon>Metazoa</taxon>
        <taxon>Ecdysozoa</taxon>
        <taxon>Nematoda</taxon>
        <taxon>Chromadorea</taxon>
        <taxon>Rhabditida</taxon>
        <taxon>Rhabditina</taxon>
        <taxon>Rhabditomorpha</taxon>
        <taxon>Rhabditoidea</taxon>
        <taxon>Rhabditidae</taxon>
        <taxon>Peloderinae</taxon>
        <taxon>Caenorhabditis</taxon>
    </lineage>
</organism>
<proteinExistence type="evidence at transcript level"/>
<feature type="chain" id="PRO_0000065180" description="Argonaute protein hrde-1">
    <location>
        <begin position="1"/>
        <end position="1032"/>
    </location>
</feature>
<feature type="domain" description="PAZ" evidence="1">
    <location>
        <begin position="376"/>
        <end position="481"/>
    </location>
</feature>
<feature type="domain" description="Piwi" evidence="2">
    <location>
        <begin position="650"/>
        <end position="977"/>
    </location>
</feature>
<feature type="region of interest" description="Required to recruit the small-RNA amplification machinery to gene targets and promote gene silencing" evidence="6">
    <location>
        <begin position="1"/>
        <end position="551"/>
    </location>
</feature>
<feature type="region of interest" description="Disordered" evidence="3">
    <location>
        <begin position="1"/>
        <end position="51"/>
    </location>
</feature>
<feature type="region of interest" description="Disordered" evidence="3">
    <location>
        <begin position="298"/>
        <end position="375"/>
    </location>
</feature>
<feature type="compositionally biased region" description="Basic and acidic residues" evidence="3">
    <location>
        <begin position="18"/>
        <end position="33"/>
    </location>
</feature>
<feature type="compositionally biased region" description="Gly residues" evidence="3">
    <location>
        <begin position="303"/>
        <end position="313"/>
    </location>
</feature>
<feature type="compositionally biased region" description="Basic and acidic residues" evidence="3">
    <location>
        <begin position="315"/>
        <end position="335"/>
    </location>
</feature>
<feature type="compositionally biased region" description="Basic and acidic residues" evidence="3">
    <location>
        <begin position="343"/>
        <end position="364"/>
    </location>
</feature>
<name>HRDE1_CAEEL</name>
<keyword id="KW-0963">Cytoplasm</keyword>
<keyword id="KW-0539">Nucleus</keyword>
<keyword id="KW-1185">Reference proteome</keyword>
<sequence length="1032" mass="117105">MADLLDKIMGSSSSNRIPKRDNRMNQDKDEPTSKRSAPMFSTPKSTTPIGRDSFATMDTMNVQMNMFPVDIKDMPHKIQRFQVDVIVCSSNGKQINANLGVLAAKGDVNSHNRRLAQYYIMRTVHDKLLVKFSGKSHHFLAYDCAATLYLPEGVYTGDDQEEVTLTIDDFPKEEWKFVSKLSRRKDDSYLVVLKPAGFVYTQGEVAQEEANRMELTRIIEIVTSQKLNNEDYLQFGNATFPRLSPPHSEPDAISEIRSGFAKVSRLSQNGGGKAFMTVDTKISPFYKDTSVIKFSSNKLSEMKGGGGGRGGYGRSDSRDSRGGYRGGRSDSRDFRGVYGNRGGNDRYRDESRGRRDMYDSRRDSGSSNGADYSPSDAAELEHAFGERGNTKRCIEEALKGLDVECTHLKGNLIRVSSIAENNAENTSFMMKDDKGEREVTVAEYFLLQYNIKLKYPRLPLVVSKRFKHESFFPMELLRIAPGQRIKVNKMSPTVQSAMTGRNASMPQHHVKLVQDILRDNLKLEQNKYMDAFGIKLMSTEPIQMTAKLLPPAQIKFKGQTYMPDMSRPAFRTQDKFVEPARIRKIGIVVFDNCIQMRQAEDFCDKLSNFCRDNGITVEKDSRDWSIRELNSSDSVAIQNLMKKWLDDRVDILVGIAREKKPDVHDILKYFEESIGLQTIQLCQQTVDKMMGGQGGRQTIDNVMRKFNLKCGGTNFFVEIPNAVRGKAVCSNNETLRKKLLEHVQFIGFEISHGASRTLFDRSRSQMDGEPSVVGVSYSLTNSTQLGGFTYLQTQKEYKLQKLDEFFPKCVRSYKEHSKTLPTRIVIYRVGAGEGNFNRVKEEVEEMRRTFDKIQPGYRPHLVVIIAQRASHARVFPSCISGNRATDQNIPSGTCVENVLTSYGYDEFILSSQTPLIGTVRPCKYTILVNDAKWSKNELMHLTYFRAFGHQVSYQPPSVPDVLYAAENLAKRGRNNYKIHQRYVNLQAVENRIIKDHSELINEDMREELAAAIVDEMSVAMNGMTIPKRNFWA</sequence>
<accession>Q09249</accession>
<gene>
    <name evidence="10" type="primary">hrde-1</name>
    <name evidence="10" type="synonym">wago-9</name>
    <name evidence="10" type="ORF">C16C10.3</name>
</gene>
<evidence type="ECO:0000255" key="1">
    <source>
        <dbReference type="PROSITE-ProRule" id="PRU00142"/>
    </source>
</evidence>
<evidence type="ECO:0000255" key="2">
    <source>
        <dbReference type="PROSITE-ProRule" id="PRU00150"/>
    </source>
</evidence>
<evidence type="ECO:0000256" key="3">
    <source>
        <dbReference type="SAM" id="MobiDB-lite"/>
    </source>
</evidence>
<evidence type="ECO:0000269" key="4">
    <source>
    </source>
</evidence>
<evidence type="ECO:0000269" key="5">
    <source>
    </source>
</evidence>
<evidence type="ECO:0000269" key="6">
    <source>
    </source>
</evidence>
<evidence type="ECO:0000303" key="7">
    <source>
    </source>
</evidence>
<evidence type="ECO:0000303" key="8">
    <source>
    </source>
</evidence>
<evidence type="ECO:0000305" key="9"/>
<evidence type="ECO:0000312" key="10">
    <source>
        <dbReference type="WormBase" id="C16C10.3"/>
    </source>
</evidence>
<reference key="1">
    <citation type="journal article" date="1998" name="Science">
        <title>Genome sequence of the nematode C. elegans: a platform for investigating biology.</title>
        <authorList>
            <consortium name="The C. elegans sequencing consortium"/>
        </authorList>
    </citation>
    <scope>NUCLEOTIDE SEQUENCE [LARGE SCALE GENOMIC DNA]</scope>
    <source>
        <strain>Bristol N2</strain>
    </source>
</reference>
<reference key="2">
    <citation type="journal article" date="2012" name="Nature">
        <title>A nuclear Argonaute promotes multigenerational epigenetic inheritance and germline immortality.</title>
        <authorList>
            <person name="Buckley B.A."/>
            <person name="Burkhart K.B."/>
            <person name="Gu S.G."/>
            <person name="Spracklin G."/>
            <person name="Kershner A."/>
            <person name="Fritz H."/>
            <person name="Kimble J."/>
            <person name="Fire A."/>
            <person name="Kennedy S."/>
        </authorList>
    </citation>
    <scope>FUNCTION</scope>
    <scope>SUBCELLULAR LOCATION</scope>
    <scope>TISSUE SPECIFICITY</scope>
    <scope>DISRUPTION PHENOTYPE</scope>
</reference>
<reference key="3">
    <citation type="journal article" date="2017" name="Genetics">
        <title>Identification and characterization of Caenorhabditis elegans RNAi inheritance machinery.</title>
        <authorList>
            <person name="Spracklin G."/>
            <person name="Fields B."/>
            <person name="Wan G."/>
            <person name="Vijayendran D."/>
            <person name="Wallig A."/>
            <person name="Shukla A."/>
            <person name="Kennedy S."/>
        </authorList>
    </citation>
    <scope>FUNCTION</scope>
    <scope>DISRUPTION PHENOTYPE</scope>
</reference>
<reference key="4">
    <citation type="journal article" date="2023" name="Cell Rep.">
        <title>The nuclear Argonaute HRDE-1 directs target gene re-localization and shuttles to nuage to promote small RNA-mediated inherited silencing.</title>
        <authorList>
            <person name="Ding Y.H."/>
            <person name="Ochoa H.J."/>
            <person name="Ishidate T."/>
            <person name="Shirayama M."/>
            <person name="Mello C.C."/>
        </authorList>
    </citation>
    <scope>FUNCTION</scope>
    <scope>SUBCELLULAR LOCATION</scope>
</reference>